<comment type="function">
    <text evidence="1">Located at the top of the head of the 30S subunit, it contacts several helices of the 16S rRNA. In the 70S ribosome it contacts the 23S rRNA (bridge B1a) and protein L5 of the 50S subunit (bridge B1b), connecting the 2 subunits; these bridges are implicated in subunit movement. Contacts the tRNAs in the A and P-sites.</text>
</comment>
<comment type="subunit">
    <text evidence="1">Part of the 30S ribosomal subunit. Forms a loose heterodimer with protein S19. Forms two bridges to the 50S subunit in the 70S ribosome.</text>
</comment>
<comment type="similarity">
    <text evidence="1">Belongs to the universal ribosomal protein uS13 family.</text>
</comment>
<organism>
    <name type="scientific">Legionella pneumophila (strain Corby)</name>
    <dbReference type="NCBI Taxonomy" id="400673"/>
    <lineage>
        <taxon>Bacteria</taxon>
        <taxon>Pseudomonadati</taxon>
        <taxon>Pseudomonadota</taxon>
        <taxon>Gammaproteobacteria</taxon>
        <taxon>Legionellales</taxon>
        <taxon>Legionellaceae</taxon>
        <taxon>Legionella</taxon>
    </lineage>
</organism>
<reference key="1">
    <citation type="submission" date="2006-11" db="EMBL/GenBank/DDBJ databases">
        <title>Identification and characterization of a new conjugation/ type IVA secretion system (trb/tra) of L. pneumophila Corby localized on a mobile genomic island.</title>
        <authorList>
            <person name="Gloeckner G."/>
            <person name="Albert-Weissenberger C."/>
            <person name="Weinmann E."/>
            <person name="Jacobi S."/>
            <person name="Schunder E."/>
            <person name="Steinert M."/>
            <person name="Buchrieser C."/>
            <person name="Hacker J."/>
            <person name="Heuner K."/>
        </authorList>
    </citation>
    <scope>NUCLEOTIDE SEQUENCE [LARGE SCALE GENOMIC DNA]</scope>
    <source>
        <strain>Corby</strain>
    </source>
</reference>
<keyword id="KW-0687">Ribonucleoprotein</keyword>
<keyword id="KW-0689">Ribosomal protein</keyword>
<keyword id="KW-0694">RNA-binding</keyword>
<keyword id="KW-0699">rRNA-binding</keyword>
<keyword id="KW-0820">tRNA-binding</keyword>
<name>RS13_LEGPC</name>
<proteinExistence type="inferred from homology"/>
<evidence type="ECO:0000255" key="1">
    <source>
        <dbReference type="HAMAP-Rule" id="MF_01315"/>
    </source>
</evidence>
<evidence type="ECO:0000256" key="2">
    <source>
        <dbReference type="SAM" id="MobiDB-lite"/>
    </source>
</evidence>
<evidence type="ECO:0000305" key="3"/>
<accession>A5IHP4</accession>
<dbReference type="EMBL" id="CP000675">
    <property type="protein sequence ID" value="ABQ56894.1"/>
    <property type="molecule type" value="Genomic_DNA"/>
</dbReference>
<dbReference type="RefSeq" id="WP_010946100.1">
    <property type="nucleotide sequence ID" value="NZ_JAPMSS010000006.1"/>
</dbReference>
<dbReference type="SMR" id="A5IHP4"/>
<dbReference type="GeneID" id="57034354"/>
<dbReference type="KEGG" id="lpc:LPC_2993"/>
<dbReference type="HOGENOM" id="CLU_103849_1_2_6"/>
<dbReference type="GO" id="GO:0005829">
    <property type="term" value="C:cytosol"/>
    <property type="evidence" value="ECO:0007669"/>
    <property type="project" value="TreeGrafter"/>
</dbReference>
<dbReference type="GO" id="GO:0015935">
    <property type="term" value="C:small ribosomal subunit"/>
    <property type="evidence" value="ECO:0007669"/>
    <property type="project" value="TreeGrafter"/>
</dbReference>
<dbReference type="GO" id="GO:0019843">
    <property type="term" value="F:rRNA binding"/>
    <property type="evidence" value="ECO:0007669"/>
    <property type="project" value="UniProtKB-UniRule"/>
</dbReference>
<dbReference type="GO" id="GO:0003735">
    <property type="term" value="F:structural constituent of ribosome"/>
    <property type="evidence" value="ECO:0007669"/>
    <property type="project" value="InterPro"/>
</dbReference>
<dbReference type="GO" id="GO:0000049">
    <property type="term" value="F:tRNA binding"/>
    <property type="evidence" value="ECO:0007669"/>
    <property type="project" value="UniProtKB-UniRule"/>
</dbReference>
<dbReference type="GO" id="GO:0006412">
    <property type="term" value="P:translation"/>
    <property type="evidence" value="ECO:0007669"/>
    <property type="project" value="UniProtKB-UniRule"/>
</dbReference>
<dbReference type="FunFam" id="1.10.8.50:FF:000001">
    <property type="entry name" value="30S ribosomal protein S13"/>
    <property type="match status" value="1"/>
</dbReference>
<dbReference type="FunFam" id="4.10.910.10:FF:000001">
    <property type="entry name" value="30S ribosomal protein S13"/>
    <property type="match status" value="1"/>
</dbReference>
<dbReference type="Gene3D" id="1.10.8.50">
    <property type="match status" value="1"/>
</dbReference>
<dbReference type="Gene3D" id="4.10.910.10">
    <property type="entry name" value="30s ribosomal protein s13, domain 2"/>
    <property type="match status" value="1"/>
</dbReference>
<dbReference type="HAMAP" id="MF_01315">
    <property type="entry name" value="Ribosomal_uS13"/>
    <property type="match status" value="1"/>
</dbReference>
<dbReference type="InterPro" id="IPR027437">
    <property type="entry name" value="Rbsml_uS13_C"/>
</dbReference>
<dbReference type="InterPro" id="IPR001892">
    <property type="entry name" value="Ribosomal_uS13"/>
</dbReference>
<dbReference type="InterPro" id="IPR010979">
    <property type="entry name" value="Ribosomal_uS13-like_H2TH"/>
</dbReference>
<dbReference type="InterPro" id="IPR019980">
    <property type="entry name" value="Ribosomal_uS13_bac-type"/>
</dbReference>
<dbReference type="InterPro" id="IPR018269">
    <property type="entry name" value="Ribosomal_uS13_CS"/>
</dbReference>
<dbReference type="NCBIfam" id="TIGR03631">
    <property type="entry name" value="uS13_bact"/>
    <property type="match status" value="1"/>
</dbReference>
<dbReference type="PANTHER" id="PTHR10871">
    <property type="entry name" value="30S RIBOSOMAL PROTEIN S13/40S RIBOSOMAL PROTEIN S18"/>
    <property type="match status" value="1"/>
</dbReference>
<dbReference type="PANTHER" id="PTHR10871:SF1">
    <property type="entry name" value="SMALL RIBOSOMAL SUBUNIT PROTEIN US13M"/>
    <property type="match status" value="1"/>
</dbReference>
<dbReference type="Pfam" id="PF00416">
    <property type="entry name" value="Ribosomal_S13"/>
    <property type="match status" value="1"/>
</dbReference>
<dbReference type="PIRSF" id="PIRSF002134">
    <property type="entry name" value="Ribosomal_S13"/>
    <property type="match status" value="1"/>
</dbReference>
<dbReference type="SUPFAM" id="SSF46946">
    <property type="entry name" value="S13-like H2TH domain"/>
    <property type="match status" value="1"/>
</dbReference>
<dbReference type="PROSITE" id="PS00646">
    <property type="entry name" value="RIBOSOMAL_S13_1"/>
    <property type="match status" value="1"/>
</dbReference>
<dbReference type="PROSITE" id="PS50159">
    <property type="entry name" value="RIBOSOMAL_S13_2"/>
    <property type="match status" value="1"/>
</dbReference>
<protein>
    <recommendedName>
        <fullName evidence="1">Small ribosomal subunit protein uS13</fullName>
    </recommendedName>
    <alternativeName>
        <fullName evidence="3">30S ribosomal protein S13</fullName>
    </alternativeName>
</protein>
<gene>
    <name evidence="1" type="primary">rpsM</name>
    <name type="ordered locus">LPC_2993</name>
</gene>
<sequence length="118" mass="13134">MARIAGVNIPDHKHVVIALTAIYGIGKTTSLKLCKTVDIDPSVKVSQLSDAQLESLRTEIAKITVEGDLRRVVTMNIKRLMDLGCYRGLRHRRGLPLRGQRTKTNARTRKGRRKGTSS</sequence>
<feature type="chain" id="PRO_0000306634" description="Small ribosomal subunit protein uS13">
    <location>
        <begin position="1"/>
        <end position="118"/>
    </location>
</feature>
<feature type="region of interest" description="Disordered" evidence="2">
    <location>
        <begin position="94"/>
        <end position="118"/>
    </location>
</feature>